<gene>
    <name evidence="1" type="primary">miaA</name>
    <name type="ordered locus">LCABL_18720</name>
</gene>
<proteinExistence type="inferred from homology"/>
<feature type="chain" id="PRO_0000377197" description="tRNA dimethylallyltransferase">
    <location>
        <begin position="1"/>
        <end position="309"/>
    </location>
</feature>
<feature type="binding site" evidence="1">
    <location>
        <begin position="13"/>
        <end position="20"/>
    </location>
    <ligand>
        <name>ATP</name>
        <dbReference type="ChEBI" id="CHEBI:30616"/>
    </ligand>
</feature>
<feature type="binding site" evidence="1">
    <location>
        <begin position="15"/>
        <end position="20"/>
    </location>
    <ligand>
        <name>substrate</name>
    </ligand>
</feature>
<feature type="site" description="Interaction with substrate tRNA" evidence="1">
    <location>
        <position position="104"/>
    </location>
</feature>
<feature type="site" description="Interaction with substrate tRNA" evidence="1">
    <location>
        <position position="127"/>
    </location>
</feature>
<protein>
    <recommendedName>
        <fullName evidence="1">tRNA dimethylallyltransferase</fullName>
        <ecNumber evidence="1">2.5.1.75</ecNumber>
    </recommendedName>
    <alternativeName>
        <fullName evidence="1">Dimethylallyl diphosphate:tRNA dimethylallyltransferase</fullName>
        <shortName evidence="1">DMAPP:tRNA dimethylallyltransferase</shortName>
        <shortName evidence="1">DMATase</shortName>
    </alternativeName>
    <alternativeName>
        <fullName evidence="1">Isopentenyl-diphosphate:tRNA isopentenyltransferase</fullName>
        <shortName evidence="1">IPP transferase</shortName>
        <shortName evidence="1">IPPT</shortName>
        <shortName evidence="1">IPTase</shortName>
    </alternativeName>
</protein>
<evidence type="ECO:0000255" key="1">
    <source>
        <dbReference type="HAMAP-Rule" id="MF_00185"/>
    </source>
</evidence>
<reference key="1">
    <citation type="submission" date="2008-06" db="EMBL/GenBank/DDBJ databases">
        <title>Lactobacillus casei BL23 complete genome sequence.</title>
        <authorList>
            <person name="Maze A."/>
            <person name="Boel G."/>
            <person name="Bourand A."/>
            <person name="Loux V."/>
            <person name="Gibrat J.F."/>
            <person name="Zuniga M."/>
            <person name="Hartke A."/>
            <person name="Deutscher J."/>
        </authorList>
    </citation>
    <scope>NUCLEOTIDE SEQUENCE [LARGE SCALE GENOMIC DNA]</scope>
    <source>
        <strain>BL23</strain>
    </source>
</reference>
<comment type="function">
    <text evidence="1">Catalyzes the transfer of a dimethylallyl group onto the adenine at position 37 in tRNAs that read codons beginning with uridine, leading to the formation of N6-(dimethylallyl)adenosine (i(6)A).</text>
</comment>
<comment type="catalytic activity">
    <reaction evidence="1">
        <text>adenosine(37) in tRNA + dimethylallyl diphosphate = N(6)-dimethylallyladenosine(37) in tRNA + diphosphate</text>
        <dbReference type="Rhea" id="RHEA:26482"/>
        <dbReference type="Rhea" id="RHEA-COMP:10162"/>
        <dbReference type="Rhea" id="RHEA-COMP:10375"/>
        <dbReference type="ChEBI" id="CHEBI:33019"/>
        <dbReference type="ChEBI" id="CHEBI:57623"/>
        <dbReference type="ChEBI" id="CHEBI:74411"/>
        <dbReference type="ChEBI" id="CHEBI:74415"/>
        <dbReference type="EC" id="2.5.1.75"/>
    </reaction>
</comment>
<comment type="cofactor">
    <cofactor evidence="1">
        <name>Mg(2+)</name>
        <dbReference type="ChEBI" id="CHEBI:18420"/>
    </cofactor>
</comment>
<comment type="subunit">
    <text evidence="1">Monomer.</text>
</comment>
<comment type="similarity">
    <text evidence="1">Belongs to the IPP transferase family.</text>
</comment>
<dbReference type="EC" id="2.5.1.75" evidence="1"/>
<dbReference type="EMBL" id="FM177140">
    <property type="protein sequence ID" value="CAQ66951.1"/>
    <property type="molecule type" value="Genomic_DNA"/>
</dbReference>
<dbReference type="SMR" id="B3WF00"/>
<dbReference type="KEGG" id="lcb:LCABL_18720"/>
<dbReference type="HOGENOM" id="CLU_032616_0_1_9"/>
<dbReference type="GO" id="GO:0005524">
    <property type="term" value="F:ATP binding"/>
    <property type="evidence" value="ECO:0007669"/>
    <property type="project" value="UniProtKB-UniRule"/>
</dbReference>
<dbReference type="GO" id="GO:0052381">
    <property type="term" value="F:tRNA dimethylallyltransferase activity"/>
    <property type="evidence" value="ECO:0007669"/>
    <property type="project" value="UniProtKB-UniRule"/>
</dbReference>
<dbReference type="GO" id="GO:0006400">
    <property type="term" value="P:tRNA modification"/>
    <property type="evidence" value="ECO:0007669"/>
    <property type="project" value="TreeGrafter"/>
</dbReference>
<dbReference type="Gene3D" id="1.10.20.140">
    <property type="match status" value="1"/>
</dbReference>
<dbReference type="Gene3D" id="3.40.50.300">
    <property type="entry name" value="P-loop containing nucleotide triphosphate hydrolases"/>
    <property type="match status" value="1"/>
</dbReference>
<dbReference type="HAMAP" id="MF_00185">
    <property type="entry name" value="IPP_trans"/>
    <property type="match status" value="1"/>
</dbReference>
<dbReference type="InterPro" id="IPR039657">
    <property type="entry name" value="Dimethylallyltransferase"/>
</dbReference>
<dbReference type="InterPro" id="IPR018022">
    <property type="entry name" value="IPT"/>
</dbReference>
<dbReference type="InterPro" id="IPR027417">
    <property type="entry name" value="P-loop_NTPase"/>
</dbReference>
<dbReference type="NCBIfam" id="TIGR00174">
    <property type="entry name" value="miaA"/>
    <property type="match status" value="1"/>
</dbReference>
<dbReference type="PANTHER" id="PTHR11088">
    <property type="entry name" value="TRNA DIMETHYLALLYLTRANSFERASE"/>
    <property type="match status" value="1"/>
</dbReference>
<dbReference type="PANTHER" id="PTHR11088:SF60">
    <property type="entry name" value="TRNA DIMETHYLALLYLTRANSFERASE"/>
    <property type="match status" value="1"/>
</dbReference>
<dbReference type="Pfam" id="PF01715">
    <property type="entry name" value="IPPT"/>
    <property type="match status" value="1"/>
</dbReference>
<dbReference type="SUPFAM" id="SSF52540">
    <property type="entry name" value="P-loop containing nucleoside triphosphate hydrolases"/>
    <property type="match status" value="2"/>
</dbReference>
<organism>
    <name type="scientific">Lacticaseibacillus casei (strain BL23)</name>
    <name type="common">Lactobacillus casei</name>
    <dbReference type="NCBI Taxonomy" id="543734"/>
    <lineage>
        <taxon>Bacteria</taxon>
        <taxon>Bacillati</taxon>
        <taxon>Bacillota</taxon>
        <taxon>Bacilli</taxon>
        <taxon>Lactobacillales</taxon>
        <taxon>Lactobacillaceae</taxon>
        <taxon>Lacticaseibacillus</taxon>
    </lineage>
</organism>
<name>MIAA_LACCB</name>
<sequence length="309" mass="34363">MDKPAKRIVMIVGPTAVGKSDLGVYLAQQLHGEVINGDAYQIYRHMDIGTAKITPKEMQGVPHHLLDIADPTVAYSVAKFKKAATAMIDTVADRQQLPILVGGTGFYLNSLRLNLPLGGKAPPTAIRQRWQVALATNGQSWLWQQLAQRDPDAAQQIAPANTRRVIRALEVGELTGRRFSDQPQPAPLFSTLVIGLTTDRAVLYDRINARVDAMMQAGLLAEVEQLLKTVPADAQAMQAIGYKELVPYLHGQAELADCVALIKQHSRHFAKRQLTYFRNQMPTHWFDLVAHPEDKNAIVTLVQQWLKQR</sequence>
<keyword id="KW-0067">ATP-binding</keyword>
<keyword id="KW-0460">Magnesium</keyword>
<keyword id="KW-0547">Nucleotide-binding</keyword>
<keyword id="KW-0808">Transferase</keyword>
<keyword id="KW-0819">tRNA processing</keyword>
<accession>B3WF00</accession>